<protein>
    <recommendedName>
        <fullName evidence="1">Membrane protein insertase YidC</fullName>
    </recommendedName>
    <alternativeName>
        <fullName evidence="1">Foldase YidC</fullName>
    </alternativeName>
    <alternativeName>
        <fullName evidence="1">Membrane integrase YidC</fullName>
    </alternativeName>
    <alternativeName>
        <fullName evidence="1">Membrane protein YidC</fullName>
    </alternativeName>
</protein>
<proteinExistence type="inferred from homology"/>
<name>YIDC_DINSH</name>
<accession>A8LMA0</accession>
<evidence type="ECO:0000255" key="1">
    <source>
        <dbReference type="HAMAP-Rule" id="MF_01810"/>
    </source>
</evidence>
<evidence type="ECO:0000256" key="2">
    <source>
        <dbReference type="SAM" id="MobiDB-lite"/>
    </source>
</evidence>
<gene>
    <name evidence="1" type="primary">yidC</name>
    <name type="ordered locus">Dshi_0328</name>
</gene>
<sequence length="606" mass="67423">MDDQNKNLILATALSFLVILVWFLLFPPEEPVTDPNAPTQITQSGETADVALTPPAAVTEAAPGAAPQTAATPTENAPRVQIDTPALEGSISLLGGRIDDLSLRNYNETLEPDSPIVRLLSPVDAPGAYYALYGWAPAGTLSFDDVPGANTLWTVESGDTLTVDTPVVLRWENGNGLIFRRTLAVDDDFMFTVTQSVENTTETDKRMQPYGIIARHGEPDTINFFVLHEGVVAMADGSLIESDYDDMLDYDFVEREGARAEVEQIEQNGWIGFTDKNWMTTLIPTPGQPFTSVAKYVGNADIYQTETRLPTQTVPGGQTVTVETRLFAGAKEWEAIRGYERELGIEGFIDSIDWGWFYFLTKPIFFVLHELNLLIGNMGVAIIVLTLLIKALLLPLAWKSYVSMARMKELQPEMEKLKEKAGDDRQKLQVAMMELYKKEKVNPAAGCLPILLQIPIFFSLYKVIFVTIELRHAPFFGPFQDLSAPDPTSIMNLFGLLPFASPEPGSILALIFIGILPLLLGISMWLQQKLNPAPTDPTQAMIFAWLPWVFMFMLGTFASGLIVYWIANNVITFAQQYFIMRRHGYKPDLFGNIVASFKKKKPSEDK</sequence>
<organism>
    <name type="scientific">Dinoroseobacter shibae (strain DSM 16493 / NCIMB 14021 / DFL 12)</name>
    <dbReference type="NCBI Taxonomy" id="398580"/>
    <lineage>
        <taxon>Bacteria</taxon>
        <taxon>Pseudomonadati</taxon>
        <taxon>Pseudomonadota</taxon>
        <taxon>Alphaproteobacteria</taxon>
        <taxon>Rhodobacterales</taxon>
        <taxon>Roseobacteraceae</taxon>
        <taxon>Dinoroseobacter</taxon>
    </lineage>
</organism>
<keyword id="KW-0997">Cell inner membrane</keyword>
<keyword id="KW-1003">Cell membrane</keyword>
<keyword id="KW-0143">Chaperone</keyword>
<keyword id="KW-0472">Membrane</keyword>
<keyword id="KW-0653">Protein transport</keyword>
<keyword id="KW-1185">Reference proteome</keyword>
<keyword id="KW-0812">Transmembrane</keyword>
<keyword id="KW-1133">Transmembrane helix</keyword>
<keyword id="KW-0813">Transport</keyword>
<feature type="chain" id="PRO_1000088251" description="Membrane protein insertase YidC">
    <location>
        <begin position="1"/>
        <end position="606"/>
    </location>
</feature>
<feature type="transmembrane region" description="Helical" evidence="1">
    <location>
        <begin position="8"/>
        <end position="28"/>
    </location>
</feature>
<feature type="transmembrane region" description="Helical" evidence="1">
    <location>
        <begin position="378"/>
        <end position="398"/>
    </location>
</feature>
<feature type="transmembrane region" description="Helical" evidence="1">
    <location>
        <begin position="448"/>
        <end position="468"/>
    </location>
</feature>
<feature type="transmembrane region" description="Helical" evidence="1">
    <location>
        <begin position="506"/>
        <end position="526"/>
    </location>
</feature>
<feature type="transmembrane region" description="Helical" evidence="1">
    <location>
        <begin position="542"/>
        <end position="562"/>
    </location>
</feature>
<feature type="region of interest" description="Disordered" evidence="2">
    <location>
        <begin position="59"/>
        <end position="79"/>
    </location>
</feature>
<feature type="compositionally biased region" description="Low complexity" evidence="2">
    <location>
        <begin position="59"/>
        <end position="78"/>
    </location>
</feature>
<dbReference type="EMBL" id="CP000830">
    <property type="protein sequence ID" value="ABV92077.1"/>
    <property type="molecule type" value="Genomic_DNA"/>
</dbReference>
<dbReference type="RefSeq" id="WP_012177007.1">
    <property type="nucleotide sequence ID" value="NC_009952.1"/>
</dbReference>
<dbReference type="SMR" id="A8LMA0"/>
<dbReference type="STRING" id="398580.Dshi_0328"/>
<dbReference type="KEGG" id="dsh:Dshi_0328"/>
<dbReference type="eggNOG" id="COG0706">
    <property type="taxonomic scope" value="Bacteria"/>
</dbReference>
<dbReference type="HOGENOM" id="CLU_016535_1_0_5"/>
<dbReference type="OrthoDB" id="9780552at2"/>
<dbReference type="Proteomes" id="UP000006833">
    <property type="component" value="Chromosome"/>
</dbReference>
<dbReference type="GO" id="GO:0005886">
    <property type="term" value="C:plasma membrane"/>
    <property type="evidence" value="ECO:0007669"/>
    <property type="project" value="UniProtKB-SubCell"/>
</dbReference>
<dbReference type="GO" id="GO:0032977">
    <property type="term" value="F:membrane insertase activity"/>
    <property type="evidence" value="ECO:0007669"/>
    <property type="project" value="InterPro"/>
</dbReference>
<dbReference type="GO" id="GO:0051205">
    <property type="term" value="P:protein insertion into membrane"/>
    <property type="evidence" value="ECO:0007669"/>
    <property type="project" value="TreeGrafter"/>
</dbReference>
<dbReference type="GO" id="GO:0015031">
    <property type="term" value="P:protein transport"/>
    <property type="evidence" value="ECO:0007669"/>
    <property type="project" value="UniProtKB-KW"/>
</dbReference>
<dbReference type="CDD" id="cd20070">
    <property type="entry name" value="5TM_YidC_Alb3"/>
    <property type="match status" value="1"/>
</dbReference>
<dbReference type="CDD" id="cd19961">
    <property type="entry name" value="EcYidC-like_peri"/>
    <property type="match status" value="1"/>
</dbReference>
<dbReference type="Gene3D" id="2.70.98.90">
    <property type="match status" value="1"/>
</dbReference>
<dbReference type="HAMAP" id="MF_01810">
    <property type="entry name" value="YidC_type1"/>
    <property type="match status" value="1"/>
</dbReference>
<dbReference type="InterPro" id="IPR019998">
    <property type="entry name" value="Membr_insert_YidC"/>
</dbReference>
<dbReference type="InterPro" id="IPR028053">
    <property type="entry name" value="Membr_insert_YidC_N"/>
</dbReference>
<dbReference type="InterPro" id="IPR001708">
    <property type="entry name" value="YidC/ALB3/OXA1/COX18"/>
</dbReference>
<dbReference type="InterPro" id="IPR028055">
    <property type="entry name" value="YidC/Oxa/ALB_C"/>
</dbReference>
<dbReference type="InterPro" id="IPR047196">
    <property type="entry name" value="YidC_ALB_C"/>
</dbReference>
<dbReference type="InterPro" id="IPR038221">
    <property type="entry name" value="YidC_periplasmic_sf"/>
</dbReference>
<dbReference type="NCBIfam" id="NF002353">
    <property type="entry name" value="PRK01318.1-4"/>
    <property type="match status" value="1"/>
</dbReference>
<dbReference type="NCBIfam" id="TIGR03593">
    <property type="entry name" value="yidC_nterm"/>
    <property type="match status" value="1"/>
</dbReference>
<dbReference type="NCBIfam" id="TIGR03592">
    <property type="entry name" value="yidC_oxa1_cterm"/>
    <property type="match status" value="1"/>
</dbReference>
<dbReference type="PANTHER" id="PTHR12428:SF65">
    <property type="entry name" value="CYTOCHROME C OXIDASE ASSEMBLY PROTEIN COX18, MITOCHONDRIAL"/>
    <property type="match status" value="1"/>
</dbReference>
<dbReference type="PANTHER" id="PTHR12428">
    <property type="entry name" value="OXA1"/>
    <property type="match status" value="1"/>
</dbReference>
<dbReference type="Pfam" id="PF02096">
    <property type="entry name" value="60KD_IMP"/>
    <property type="match status" value="1"/>
</dbReference>
<dbReference type="Pfam" id="PF14849">
    <property type="entry name" value="YidC_periplas"/>
    <property type="match status" value="1"/>
</dbReference>
<dbReference type="PRINTS" id="PR00701">
    <property type="entry name" value="60KDINNERMP"/>
</dbReference>
<dbReference type="PRINTS" id="PR01900">
    <property type="entry name" value="YIDCPROTEIN"/>
</dbReference>
<comment type="function">
    <text evidence="1">Required for the insertion and/or proper folding and/or complex formation of integral membrane proteins into the membrane. Involved in integration of membrane proteins that insert both dependently and independently of the Sec translocase complex, as well as at least some lipoproteins. Aids folding of multispanning membrane proteins.</text>
</comment>
<comment type="subunit">
    <text evidence="1">Interacts with the Sec translocase complex via SecD. Specifically interacts with transmembrane segments of nascent integral membrane proteins during membrane integration.</text>
</comment>
<comment type="subcellular location">
    <subcellularLocation>
        <location evidence="1">Cell inner membrane</location>
        <topology evidence="1">Multi-pass membrane protein</topology>
    </subcellularLocation>
</comment>
<comment type="similarity">
    <text evidence="1">Belongs to the OXA1/ALB3/YidC family. Type 1 subfamily.</text>
</comment>
<reference key="1">
    <citation type="journal article" date="2010" name="ISME J.">
        <title>The complete genome sequence of the algal symbiont Dinoroseobacter shibae: a hitchhiker's guide to life in the sea.</title>
        <authorList>
            <person name="Wagner-Dobler I."/>
            <person name="Ballhausen B."/>
            <person name="Berger M."/>
            <person name="Brinkhoff T."/>
            <person name="Buchholz I."/>
            <person name="Bunk B."/>
            <person name="Cypionka H."/>
            <person name="Daniel R."/>
            <person name="Drepper T."/>
            <person name="Gerdts G."/>
            <person name="Hahnke S."/>
            <person name="Han C."/>
            <person name="Jahn D."/>
            <person name="Kalhoefer D."/>
            <person name="Kiss H."/>
            <person name="Klenk H.P."/>
            <person name="Kyrpides N."/>
            <person name="Liebl W."/>
            <person name="Liesegang H."/>
            <person name="Meincke L."/>
            <person name="Pati A."/>
            <person name="Petersen J."/>
            <person name="Piekarski T."/>
            <person name="Pommerenke C."/>
            <person name="Pradella S."/>
            <person name="Pukall R."/>
            <person name="Rabus R."/>
            <person name="Stackebrandt E."/>
            <person name="Thole S."/>
            <person name="Thompson L."/>
            <person name="Tielen P."/>
            <person name="Tomasch J."/>
            <person name="von Jan M."/>
            <person name="Wanphrut N."/>
            <person name="Wichels A."/>
            <person name="Zech H."/>
            <person name="Simon M."/>
        </authorList>
    </citation>
    <scope>NUCLEOTIDE SEQUENCE [LARGE SCALE GENOMIC DNA]</scope>
    <source>
        <strain>DSM 16493 / NCIMB 14021 / DFL 12</strain>
    </source>
</reference>